<name>PEX39_MOUSE</name>
<comment type="function">
    <text evidence="1">May be a peroxin involved in the PTS2-mediated protein import pathway.</text>
</comment>
<comment type="subcellular location">
    <subcellularLocation>
        <location evidence="1">Peroxisome</location>
    </subcellularLocation>
</comment>
<evidence type="ECO:0000250" key="1">
    <source>
        <dbReference type="UniProtKB" id="Q5I0X4"/>
    </source>
</evidence>
<evidence type="ECO:0000256" key="2">
    <source>
        <dbReference type="SAM" id="MobiDB-lite"/>
    </source>
</evidence>
<evidence type="ECO:0000305" key="3"/>
<evidence type="ECO:0007744" key="4">
    <source>
    </source>
</evidence>
<reference key="1">
    <citation type="journal article" date="2005" name="Science">
        <title>The transcriptional landscape of the mammalian genome.</title>
        <authorList>
            <person name="Carninci P."/>
            <person name="Kasukawa T."/>
            <person name="Katayama S."/>
            <person name="Gough J."/>
            <person name="Frith M.C."/>
            <person name="Maeda N."/>
            <person name="Oyama R."/>
            <person name="Ravasi T."/>
            <person name="Lenhard B."/>
            <person name="Wells C."/>
            <person name="Kodzius R."/>
            <person name="Shimokawa K."/>
            <person name="Bajic V.B."/>
            <person name="Brenner S.E."/>
            <person name="Batalov S."/>
            <person name="Forrest A.R."/>
            <person name="Zavolan M."/>
            <person name="Davis M.J."/>
            <person name="Wilming L.G."/>
            <person name="Aidinis V."/>
            <person name="Allen J.E."/>
            <person name="Ambesi-Impiombato A."/>
            <person name="Apweiler R."/>
            <person name="Aturaliya R.N."/>
            <person name="Bailey T.L."/>
            <person name="Bansal M."/>
            <person name="Baxter L."/>
            <person name="Beisel K.W."/>
            <person name="Bersano T."/>
            <person name="Bono H."/>
            <person name="Chalk A.M."/>
            <person name="Chiu K.P."/>
            <person name="Choudhary V."/>
            <person name="Christoffels A."/>
            <person name="Clutterbuck D.R."/>
            <person name="Crowe M.L."/>
            <person name="Dalla E."/>
            <person name="Dalrymple B.P."/>
            <person name="de Bono B."/>
            <person name="Della Gatta G."/>
            <person name="di Bernardo D."/>
            <person name="Down T."/>
            <person name="Engstrom P."/>
            <person name="Fagiolini M."/>
            <person name="Faulkner G."/>
            <person name="Fletcher C.F."/>
            <person name="Fukushima T."/>
            <person name="Furuno M."/>
            <person name="Futaki S."/>
            <person name="Gariboldi M."/>
            <person name="Georgii-Hemming P."/>
            <person name="Gingeras T.R."/>
            <person name="Gojobori T."/>
            <person name="Green R.E."/>
            <person name="Gustincich S."/>
            <person name="Harbers M."/>
            <person name="Hayashi Y."/>
            <person name="Hensch T.K."/>
            <person name="Hirokawa N."/>
            <person name="Hill D."/>
            <person name="Huminiecki L."/>
            <person name="Iacono M."/>
            <person name="Ikeo K."/>
            <person name="Iwama A."/>
            <person name="Ishikawa T."/>
            <person name="Jakt M."/>
            <person name="Kanapin A."/>
            <person name="Katoh M."/>
            <person name="Kawasawa Y."/>
            <person name="Kelso J."/>
            <person name="Kitamura H."/>
            <person name="Kitano H."/>
            <person name="Kollias G."/>
            <person name="Krishnan S.P."/>
            <person name="Kruger A."/>
            <person name="Kummerfeld S.K."/>
            <person name="Kurochkin I.V."/>
            <person name="Lareau L.F."/>
            <person name="Lazarevic D."/>
            <person name="Lipovich L."/>
            <person name="Liu J."/>
            <person name="Liuni S."/>
            <person name="McWilliam S."/>
            <person name="Madan Babu M."/>
            <person name="Madera M."/>
            <person name="Marchionni L."/>
            <person name="Matsuda H."/>
            <person name="Matsuzawa S."/>
            <person name="Miki H."/>
            <person name="Mignone F."/>
            <person name="Miyake S."/>
            <person name="Morris K."/>
            <person name="Mottagui-Tabar S."/>
            <person name="Mulder N."/>
            <person name="Nakano N."/>
            <person name="Nakauchi H."/>
            <person name="Ng P."/>
            <person name="Nilsson R."/>
            <person name="Nishiguchi S."/>
            <person name="Nishikawa S."/>
            <person name="Nori F."/>
            <person name="Ohara O."/>
            <person name="Okazaki Y."/>
            <person name="Orlando V."/>
            <person name="Pang K.C."/>
            <person name="Pavan W.J."/>
            <person name="Pavesi G."/>
            <person name="Pesole G."/>
            <person name="Petrovsky N."/>
            <person name="Piazza S."/>
            <person name="Reed J."/>
            <person name="Reid J.F."/>
            <person name="Ring B.Z."/>
            <person name="Ringwald M."/>
            <person name="Rost B."/>
            <person name="Ruan Y."/>
            <person name="Salzberg S.L."/>
            <person name="Sandelin A."/>
            <person name="Schneider C."/>
            <person name="Schoenbach C."/>
            <person name="Sekiguchi K."/>
            <person name="Semple C.A."/>
            <person name="Seno S."/>
            <person name="Sessa L."/>
            <person name="Sheng Y."/>
            <person name="Shibata Y."/>
            <person name="Shimada H."/>
            <person name="Shimada K."/>
            <person name="Silva D."/>
            <person name="Sinclair B."/>
            <person name="Sperling S."/>
            <person name="Stupka E."/>
            <person name="Sugiura K."/>
            <person name="Sultana R."/>
            <person name="Takenaka Y."/>
            <person name="Taki K."/>
            <person name="Tammoja K."/>
            <person name="Tan S.L."/>
            <person name="Tang S."/>
            <person name="Taylor M.S."/>
            <person name="Tegner J."/>
            <person name="Teichmann S.A."/>
            <person name="Ueda H.R."/>
            <person name="van Nimwegen E."/>
            <person name="Verardo R."/>
            <person name="Wei C.L."/>
            <person name="Yagi K."/>
            <person name="Yamanishi H."/>
            <person name="Zabarovsky E."/>
            <person name="Zhu S."/>
            <person name="Zimmer A."/>
            <person name="Hide W."/>
            <person name="Bult C."/>
            <person name="Grimmond S.M."/>
            <person name="Teasdale R.D."/>
            <person name="Liu E.T."/>
            <person name="Brusic V."/>
            <person name="Quackenbush J."/>
            <person name="Wahlestedt C."/>
            <person name="Mattick J.S."/>
            <person name="Hume D.A."/>
            <person name="Kai C."/>
            <person name="Sasaki D."/>
            <person name="Tomaru Y."/>
            <person name="Fukuda S."/>
            <person name="Kanamori-Katayama M."/>
            <person name="Suzuki M."/>
            <person name="Aoki J."/>
            <person name="Arakawa T."/>
            <person name="Iida J."/>
            <person name="Imamura K."/>
            <person name="Itoh M."/>
            <person name="Kato T."/>
            <person name="Kawaji H."/>
            <person name="Kawagashira N."/>
            <person name="Kawashima T."/>
            <person name="Kojima M."/>
            <person name="Kondo S."/>
            <person name="Konno H."/>
            <person name="Nakano K."/>
            <person name="Ninomiya N."/>
            <person name="Nishio T."/>
            <person name="Okada M."/>
            <person name="Plessy C."/>
            <person name="Shibata K."/>
            <person name="Shiraki T."/>
            <person name="Suzuki S."/>
            <person name="Tagami M."/>
            <person name="Waki K."/>
            <person name="Watahiki A."/>
            <person name="Okamura-Oho Y."/>
            <person name="Suzuki H."/>
            <person name="Kawai J."/>
            <person name="Hayashizaki Y."/>
        </authorList>
    </citation>
    <scope>NUCLEOTIDE SEQUENCE [LARGE SCALE MRNA]</scope>
    <source>
        <strain>C57BL/6J</strain>
        <tissue>Tongue</tissue>
    </source>
</reference>
<reference key="2">
    <citation type="submission" date="2005-07" db="EMBL/GenBank/DDBJ databases">
        <authorList>
            <person name="Mural R.J."/>
            <person name="Adams M.D."/>
            <person name="Myers E.W."/>
            <person name="Smith H.O."/>
            <person name="Venter J.C."/>
        </authorList>
    </citation>
    <scope>NUCLEOTIDE SEQUENCE [LARGE SCALE GENOMIC DNA]</scope>
</reference>
<reference key="3">
    <citation type="journal article" date="2004" name="Genome Res.">
        <title>The status, quality, and expansion of the NIH full-length cDNA project: the Mammalian Gene Collection (MGC).</title>
        <authorList>
            <consortium name="The MGC Project Team"/>
        </authorList>
    </citation>
    <scope>NUCLEOTIDE SEQUENCE [LARGE SCALE MRNA]</scope>
    <source>
        <tissue>Mammary gland</tissue>
    </source>
</reference>
<reference key="4">
    <citation type="journal article" date="2010" name="Cell">
        <title>A tissue-specific atlas of mouse protein phosphorylation and expression.</title>
        <authorList>
            <person name="Huttlin E.L."/>
            <person name="Jedrychowski M.P."/>
            <person name="Elias J.E."/>
            <person name="Goswami T."/>
            <person name="Rad R."/>
            <person name="Beausoleil S.A."/>
            <person name="Villen J."/>
            <person name="Haas W."/>
            <person name="Sowa M.E."/>
            <person name="Gygi S.P."/>
        </authorList>
    </citation>
    <scope>PHOSPHORYLATION [LARGE SCALE ANALYSIS] AT SER-102</scope>
    <scope>IDENTIFICATION BY MASS SPECTROMETRY [LARGE SCALE ANALYSIS]</scope>
    <source>
        <tissue>Brown adipose tissue</tissue>
        <tissue>Kidney</tissue>
        <tissue>Liver</tissue>
        <tissue>Pancreas</tissue>
        <tissue>Testis</tissue>
    </source>
</reference>
<gene>
    <name type="primary">Pex39</name>
</gene>
<dbReference type="EMBL" id="AK003321">
    <property type="protein sequence ID" value="BAB22712.2"/>
    <property type="molecule type" value="mRNA"/>
</dbReference>
<dbReference type="EMBL" id="AK009696">
    <property type="protein sequence ID" value="BAB26445.1"/>
    <property type="molecule type" value="mRNA"/>
</dbReference>
<dbReference type="EMBL" id="CH466559">
    <property type="protein sequence ID" value="EDL23541.1"/>
    <property type="molecule type" value="Genomic_DNA"/>
</dbReference>
<dbReference type="EMBL" id="BC038674">
    <property type="protein sequence ID" value="AAH38674.1"/>
    <property type="molecule type" value="mRNA"/>
</dbReference>
<dbReference type="RefSeq" id="NP_080242.1">
    <property type="nucleotide sequence ID" value="NM_025966.3"/>
</dbReference>
<dbReference type="FunCoup" id="Q9D727">
    <property type="interactions" value="3"/>
</dbReference>
<dbReference type="STRING" id="10090.ENSMUSP00000071378"/>
<dbReference type="GlyGen" id="Q9D727">
    <property type="glycosylation" value="2 sites, 1 O-linked glycan (2 sites)"/>
</dbReference>
<dbReference type="iPTMnet" id="Q9D727"/>
<dbReference type="PhosphoSitePlus" id="Q9D727"/>
<dbReference type="jPOST" id="Q9D727"/>
<dbReference type="PaxDb" id="10090-ENSMUSP00000071378"/>
<dbReference type="PeptideAtlas" id="Q9D727"/>
<dbReference type="Pumba" id="Q9D727"/>
<dbReference type="Antibodypedia" id="49014">
    <property type="antibodies" value="27 antibodies from 6 providers"/>
</dbReference>
<dbReference type="DNASU" id="67101"/>
<dbReference type="Ensembl" id="ENSMUST00000071430.7">
    <property type="protein sequence ID" value="ENSMUSP00000071378.6"/>
    <property type="gene ID" value="ENSMUSG00000062619.7"/>
</dbReference>
<dbReference type="GeneID" id="67101"/>
<dbReference type="KEGG" id="mmu:67101"/>
<dbReference type="UCSC" id="uc008cui.1">
    <property type="organism name" value="mouse"/>
</dbReference>
<dbReference type="AGR" id="MGI:1914351"/>
<dbReference type="CTD" id="441150"/>
<dbReference type="MGI" id="MGI:1914351">
    <property type="gene designation" value="2310039H08Rik"/>
</dbReference>
<dbReference type="VEuPathDB" id="HostDB:ENSMUSG00000062619"/>
<dbReference type="eggNOG" id="ENOG502SFN3">
    <property type="taxonomic scope" value="Eukaryota"/>
</dbReference>
<dbReference type="GeneTree" id="ENSGT00440000034488"/>
<dbReference type="HOGENOM" id="CLU_2126822_0_0_1"/>
<dbReference type="InParanoid" id="Q9D727"/>
<dbReference type="OMA" id="SWWQDMD"/>
<dbReference type="OrthoDB" id="9936937at2759"/>
<dbReference type="PhylomeDB" id="Q9D727"/>
<dbReference type="TreeFam" id="TF339789"/>
<dbReference type="BioGRID-ORCS" id="67101">
    <property type="hits" value="2 hits in 77 CRISPR screens"/>
</dbReference>
<dbReference type="PRO" id="PR:Q9D727"/>
<dbReference type="Proteomes" id="UP000000589">
    <property type="component" value="Chromosome 17"/>
</dbReference>
<dbReference type="RNAct" id="Q9D727">
    <property type="molecule type" value="protein"/>
</dbReference>
<dbReference type="Bgee" id="ENSMUSG00000062619">
    <property type="expression patterns" value="Expressed in proximal tubule and 249 other cell types or tissues"/>
</dbReference>
<dbReference type="GO" id="GO:0005777">
    <property type="term" value="C:peroxisome"/>
    <property type="evidence" value="ECO:0007669"/>
    <property type="project" value="UniProtKB-SubCell"/>
</dbReference>
<dbReference type="InterPro" id="IPR040554">
    <property type="entry name" value="KPWE_PEX14_dom"/>
</dbReference>
<dbReference type="InterPro" id="IPR039995">
    <property type="entry name" value="PEX39"/>
</dbReference>
<dbReference type="PANTHER" id="PTHR40657">
    <property type="entry name" value="HYPOTHETICAL PROTEIN LOC681367"/>
    <property type="match status" value="1"/>
</dbReference>
<dbReference type="PANTHER" id="PTHR40657:SF1">
    <property type="entry name" value="RIKEN CDNA 2310039H08 GENE"/>
    <property type="match status" value="1"/>
</dbReference>
<dbReference type="Pfam" id="PF17733">
    <property type="entry name" value="KPWE_dom"/>
    <property type="match status" value="1"/>
</dbReference>
<proteinExistence type="evidence at protein level"/>
<sequence>MSWWQDMDQRGGVSSPSGALASAEPAPASVTLAELLHLVQKGQEVPGLEKRHITATHGEPTASLLPRRPKPWEDAGSAASPCTIALDTRTQPPTIEERSRGSPAAQLDGGPRVS</sequence>
<feature type="chain" id="PRO_0000371343" description="Peroxisomal biogenesis factor 39">
    <location>
        <begin position="1"/>
        <end position="114"/>
    </location>
</feature>
<feature type="region of interest" description="Disordered" evidence="2">
    <location>
        <begin position="1"/>
        <end position="26"/>
    </location>
</feature>
<feature type="region of interest" description="Disordered" evidence="2">
    <location>
        <begin position="53"/>
        <end position="114"/>
    </location>
</feature>
<feature type="modified residue" description="Phosphoserine" evidence="4">
    <location>
        <position position="102"/>
    </location>
</feature>
<feature type="sequence conflict" description="In Ref. 1; BAB22712." evidence="3" ref="1">
    <original>W</original>
    <variation>G</variation>
    <location>
        <position position="4"/>
    </location>
</feature>
<organism>
    <name type="scientific">Mus musculus</name>
    <name type="common">Mouse</name>
    <dbReference type="NCBI Taxonomy" id="10090"/>
    <lineage>
        <taxon>Eukaryota</taxon>
        <taxon>Metazoa</taxon>
        <taxon>Chordata</taxon>
        <taxon>Craniata</taxon>
        <taxon>Vertebrata</taxon>
        <taxon>Euteleostomi</taxon>
        <taxon>Mammalia</taxon>
        <taxon>Eutheria</taxon>
        <taxon>Euarchontoglires</taxon>
        <taxon>Glires</taxon>
        <taxon>Rodentia</taxon>
        <taxon>Myomorpha</taxon>
        <taxon>Muroidea</taxon>
        <taxon>Muridae</taxon>
        <taxon>Murinae</taxon>
        <taxon>Mus</taxon>
        <taxon>Mus</taxon>
    </lineage>
</organism>
<protein>
    <recommendedName>
        <fullName>Peroxisomal biogenesis factor 39</fullName>
    </recommendedName>
    <alternativeName>
        <fullName>Protein C6orf226 homolog</fullName>
    </alternativeName>
</protein>
<accession>Q9D727</accession>
<accession>Q9D1N0</accession>
<keyword id="KW-0576">Peroxisome</keyword>
<keyword id="KW-0597">Phosphoprotein</keyword>
<keyword id="KW-1185">Reference proteome</keyword>